<feature type="chain" id="PRO_0000096554" description="Major pollen allergen Jun v 4">
    <location>
        <begin position="1"/>
        <end position="5" status="greater than"/>
    </location>
</feature>
<feature type="non-terminal residue" evidence="2">
    <location>
        <position position="5"/>
    </location>
</feature>
<evidence type="ECO:0000269" key="1">
    <source>
    </source>
</evidence>
<evidence type="ECO:0000303" key="2">
    <source>
    </source>
</evidence>
<evidence type="ECO:0000305" key="3"/>
<protein>
    <recommendedName>
        <fullName>Major pollen allergen Jun v 4</fullName>
    </recommendedName>
    <allergenName>Jun v 4</allergenName>
</protein>
<dbReference type="Allergome" id="433">
    <property type="allergen name" value="Jun v 145kD"/>
</dbReference>
<name>MPAJ4_JUNVI</name>
<organism>
    <name type="scientific">Juniperus virginiana</name>
    <name type="common">Eastern redcedar</name>
    <name type="synonym">Sabina virginiana</name>
    <dbReference type="NCBI Taxonomy" id="39584"/>
    <lineage>
        <taxon>Eukaryota</taxon>
        <taxon>Viridiplantae</taxon>
        <taxon>Streptophyta</taxon>
        <taxon>Embryophyta</taxon>
        <taxon>Tracheophyta</taxon>
        <taxon>Spermatophyta</taxon>
        <taxon>Pinopsida</taxon>
        <taxon>Pinidae</taxon>
        <taxon>Conifers II</taxon>
        <taxon>Cupressales</taxon>
        <taxon>Cupressaceae</taxon>
        <taxon>Juniperus</taxon>
    </lineage>
</organism>
<proteinExistence type="evidence at protein level"/>
<sequence length="5" mass="491">ADAKS</sequence>
<keyword id="KW-0020">Allergen</keyword>
<keyword id="KW-0903">Direct protein sequencing</keyword>
<reference evidence="3" key="1">
    <citation type="journal article" date="2001" name="Clin. Exp. Allergy">
        <title>Identification of mutations in the genes for the pollen allergens of eastern red cedar (Juniperus virginiana).</title>
        <authorList>
            <person name="Midoro-Horiuti T."/>
            <person name="Goldblum R.M."/>
            <person name="Brooks E.G."/>
        </authorList>
    </citation>
    <scope>PROTEIN SEQUENCE</scope>
    <scope>ALLERGEN</scope>
    <source>
        <tissue evidence="1">Pollen</tissue>
    </source>
</reference>
<accession>P81826</accession>
<comment type="allergen">
    <text evidence="1">Causes an allergic reaction in human. Binds to IgE of patients who are allergic to J.ashei.</text>
</comment>